<feature type="chain" id="PRO_1000097483" description="Translational regulator CsrA">
    <location>
        <begin position="1"/>
        <end position="63"/>
    </location>
</feature>
<reference key="1">
    <citation type="journal article" date="2008" name="J. Bacteriol.">
        <title>Insights into plant cell wall degradation from the genome sequence of the soil bacterium Cellvibrio japonicus.</title>
        <authorList>
            <person name="DeBoy R.T."/>
            <person name="Mongodin E.F."/>
            <person name="Fouts D.E."/>
            <person name="Tailford L.E."/>
            <person name="Khouri H."/>
            <person name="Emerson J.B."/>
            <person name="Mohamoud Y."/>
            <person name="Watkins K."/>
            <person name="Henrissat B."/>
            <person name="Gilbert H.J."/>
            <person name="Nelson K.E."/>
        </authorList>
    </citation>
    <scope>NUCLEOTIDE SEQUENCE [LARGE SCALE GENOMIC DNA]</scope>
    <source>
        <strain>Ueda107</strain>
    </source>
</reference>
<evidence type="ECO:0000255" key="1">
    <source>
        <dbReference type="HAMAP-Rule" id="MF_00167"/>
    </source>
</evidence>
<comment type="function">
    <text evidence="1">A key translational regulator that binds mRNA to regulate translation initiation and/or mRNA stability. Mediates global changes in gene expression, shifting from rapid growth to stress survival by linking envelope stress, the stringent response and the catabolite repression systems. Usually binds in the 5'-UTR; binding at or near the Shine-Dalgarno sequence prevents ribosome-binding, repressing translation, binding elsewhere in the 5'-UTR can activate translation and/or stabilize the mRNA. Its function is antagonized by small RNA(s).</text>
</comment>
<comment type="subunit">
    <text evidence="1">Homodimer; the beta-strands of each monomer intercalate to form a hydrophobic core, while the alpha-helices form wings that extend away from the core.</text>
</comment>
<comment type="subcellular location">
    <subcellularLocation>
        <location evidence="1">Cytoplasm</location>
    </subcellularLocation>
</comment>
<comment type="similarity">
    <text evidence="1">Belongs to the CsrA/RsmA family.</text>
</comment>
<sequence>MLILTRRIGETLMVGDEVTVTVLGVKGNQVRIGVNAPKDIAVHREEIYQRIQREKQNQEEQDN</sequence>
<gene>
    <name evidence="1" type="primary">csrA</name>
    <name type="ordered locus">CJA_1361</name>
</gene>
<keyword id="KW-0010">Activator</keyword>
<keyword id="KW-0963">Cytoplasm</keyword>
<keyword id="KW-1185">Reference proteome</keyword>
<keyword id="KW-0678">Repressor</keyword>
<keyword id="KW-0694">RNA-binding</keyword>
<keyword id="KW-0810">Translation regulation</keyword>
<protein>
    <recommendedName>
        <fullName evidence="1">Translational regulator CsrA</fullName>
    </recommendedName>
    <alternativeName>
        <fullName evidence="1">Carbon storage regulator</fullName>
    </alternativeName>
</protein>
<dbReference type="EMBL" id="CP000934">
    <property type="protein sequence ID" value="ACE84232.1"/>
    <property type="molecule type" value="Genomic_DNA"/>
</dbReference>
<dbReference type="RefSeq" id="WP_012486997.1">
    <property type="nucleotide sequence ID" value="NC_010995.1"/>
</dbReference>
<dbReference type="SMR" id="B3PCZ8"/>
<dbReference type="STRING" id="498211.CJA_1361"/>
<dbReference type="KEGG" id="cja:CJA_1361"/>
<dbReference type="eggNOG" id="COG1551">
    <property type="taxonomic scope" value="Bacteria"/>
</dbReference>
<dbReference type="HOGENOM" id="CLU_164837_2_1_6"/>
<dbReference type="OrthoDB" id="9809061at2"/>
<dbReference type="Proteomes" id="UP000001036">
    <property type="component" value="Chromosome"/>
</dbReference>
<dbReference type="GO" id="GO:0005829">
    <property type="term" value="C:cytosol"/>
    <property type="evidence" value="ECO:0007669"/>
    <property type="project" value="TreeGrafter"/>
</dbReference>
<dbReference type="GO" id="GO:0048027">
    <property type="term" value="F:mRNA 5'-UTR binding"/>
    <property type="evidence" value="ECO:0007669"/>
    <property type="project" value="UniProtKB-UniRule"/>
</dbReference>
<dbReference type="GO" id="GO:0006402">
    <property type="term" value="P:mRNA catabolic process"/>
    <property type="evidence" value="ECO:0007669"/>
    <property type="project" value="InterPro"/>
</dbReference>
<dbReference type="GO" id="GO:0045947">
    <property type="term" value="P:negative regulation of translational initiation"/>
    <property type="evidence" value="ECO:0007669"/>
    <property type="project" value="UniProtKB-UniRule"/>
</dbReference>
<dbReference type="GO" id="GO:0045948">
    <property type="term" value="P:positive regulation of translational initiation"/>
    <property type="evidence" value="ECO:0007669"/>
    <property type="project" value="UniProtKB-UniRule"/>
</dbReference>
<dbReference type="GO" id="GO:0006109">
    <property type="term" value="P:regulation of carbohydrate metabolic process"/>
    <property type="evidence" value="ECO:0007669"/>
    <property type="project" value="UniProtKB-UniRule"/>
</dbReference>
<dbReference type="FunFam" id="2.60.40.4380:FF:000001">
    <property type="entry name" value="Translational regulator CsrA"/>
    <property type="match status" value="1"/>
</dbReference>
<dbReference type="Gene3D" id="2.60.40.4380">
    <property type="entry name" value="Translational regulator CsrA"/>
    <property type="match status" value="1"/>
</dbReference>
<dbReference type="HAMAP" id="MF_00167">
    <property type="entry name" value="CsrA"/>
    <property type="match status" value="1"/>
</dbReference>
<dbReference type="InterPro" id="IPR003751">
    <property type="entry name" value="CsrA"/>
</dbReference>
<dbReference type="InterPro" id="IPR036107">
    <property type="entry name" value="CsrA_sf"/>
</dbReference>
<dbReference type="NCBIfam" id="TIGR00202">
    <property type="entry name" value="csrA"/>
    <property type="match status" value="1"/>
</dbReference>
<dbReference type="NCBIfam" id="NF002469">
    <property type="entry name" value="PRK01712.1"/>
    <property type="match status" value="1"/>
</dbReference>
<dbReference type="PANTHER" id="PTHR34984">
    <property type="entry name" value="CARBON STORAGE REGULATOR"/>
    <property type="match status" value="1"/>
</dbReference>
<dbReference type="PANTHER" id="PTHR34984:SF1">
    <property type="entry name" value="CARBON STORAGE REGULATOR"/>
    <property type="match status" value="1"/>
</dbReference>
<dbReference type="Pfam" id="PF02599">
    <property type="entry name" value="CsrA"/>
    <property type="match status" value="1"/>
</dbReference>
<dbReference type="SUPFAM" id="SSF117130">
    <property type="entry name" value="CsrA-like"/>
    <property type="match status" value="1"/>
</dbReference>
<name>CSRA_CELJU</name>
<proteinExistence type="inferred from homology"/>
<accession>B3PCZ8</accession>
<organism>
    <name type="scientific">Cellvibrio japonicus (strain Ueda107)</name>
    <name type="common">Pseudomonas fluorescens subsp. cellulosa</name>
    <dbReference type="NCBI Taxonomy" id="498211"/>
    <lineage>
        <taxon>Bacteria</taxon>
        <taxon>Pseudomonadati</taxon>
        <taxon>Pseudomonadota</taxon>
        <taxon>Gammaproteobacteria</taxon>
        <taxon>Cellvibrionales</taxon>
        <taxon>Cellvibrionaceae</taxon>
        <taxon>Cellvibrio</taxon>
    </lineage>
</organism>